<name>YBEY_MYCPU</name>
<organism>
    <name type="scientific">Mycoplasmopsis pulmonis (strain UAB CTIP)</name>
    <name type="common">Mycoplasma pulmonis</name>
    <dbReference type="NCBI Taxonomy" id="272635"/>
    <lineage>
        <taxon>Bacteria</taxon>
        <taxon>Bacillati</taxon>
        <taxon>Mycoplasmatota</taxon>
        <taxon>Mycoplasmoidales</taxon>
        <taxon>Metamycoplasmataceae</taxon>
        <taxon>Mycoplasmopsis</taxon>
    </lineage>
</organism>
<dbReference type="EC" id="3.1.-.-" evidence="1"/>
<dbReference type="EMBL" id="AL445564">
    <property type="protein sequence ID" value="CAC13551.1"/>
    <property type="molecule type" value="Genomic_DNA"/>
</dbReference>
<dbReference type="PIR" id="B90559">
    <property type="entry name" value="B90559"/>
</dbReference>
<dbReference type="SMR" id="Q98QI3"/>
<dbReference type="STRING" id="272635.gene:17576978"/>
<dbReference type="KEGG" id="mpu:MYPU_3780"/>
<dbReference type="eggNOG" id="COG0319">
    <property type="taxonomic scope" value="Bacteria"/>
</dbReference>
<dbReference type="HOGENOM" id="CLU_106710_3_0_14"/>
<dbReference type="BioCyc" id="MPUL272635:G1GT6-385-MONOMER"/>
<dbReference type="Proteomes" id="UP000000528">
    <property type="component" value="Chromosome"/>
</dbReference>
<dbReference type="GO" id="GO:0005737">
    <property type="term" value="C:cytoplasm"/>
    <property type="evidence" value="ECO:0007669"/>
    <property type="project" value="UniProtKB-SubCell"/>
</dbReference>
<dbReference type="GO" id="GO:0004222">
    <property type="term" value="F:metalloendopeptidase activity"/>
    <property type="evidence" value="ECO:0007669"/>
    <property type="project" value="InterPro"/>
</dbReference>
<dbReference type="GO" id="GO:0004521">
    <property type="term" value="F:RNA endonuclease activity"/>
    <property type="evidence" value="ECO:0007669"/>
    <property type="project" value="UniProtKB-UniRule"/>
</dbReference>
<dbReference type="GO" id="GO:0008270">
    <property type="term" value="F:zinc ion binding"/>
    <property type="evidence" value="ECO:0007669"/>
    <property type="project" value="UniProtKB-UniRule"/>
</dbReference>
<dbReference type="GO" id="GO:0006364">
    <property type="term" value="P:rRNA processing"/>
    <property type="evidence" value="ECO:0007669"/>
    <property type="project" value="UniProtKB-UniRule"/>
</dbReference>
<dbReference type="Gene3D" id="3.40.390.30">
    <property type="entry name" value="Metalloproteases ('zincins'), catalytic domain"/>
    <property type="match status" value="1"/>
</dbReference>
<dbReference type="HAMAP" id="MF_00009">
    <property type="entry name" value="Endoribonucl_YbeY"/>
    <property type="match status" value="1"/>
</dbReference>
<dbReference type="InterPro" id="IPR023091">
    <property type="entry name" value="MetalPrtase_cat_dom_sf_prd"/>
</dbReference>
<dbReference type="InterPro" id="IPR002036">
    <property type="entry name" value="YbeY"/>
</dbReference>
<dbReference type="InterPro" id="IPR020549">
    <property type="entry name" value="YbeY_CS"/>
</dbReference>
<dbReference type="NCBIfam" id="TIGR00043">
    <property type="entry name" value="rRNA maturation RNase YbeY"/>
    <property type="match status" value="1"/>
</dbReference>
<dbReference type="PANTHER" id="PTHR46986">
    <property type="entry name" value="ENDORIBONUCLEASE YBEY, CHLOROPLASTIC"/>
    <property type="match status" value="1"/>
</dbReference>
<dbReference type="PANTHER" id="PTHR46986:SF1">
    <property type="entry name" value="ENDORIBONUCLEASE YBEY, CHLOROPLASTIC"/>
    <property type="match status" value="1"/>
</dbReference>
<dbReference type="Pfam" id="PF02130">
    <property type="entry name" value="YbeY"/>
    <property type="match status" value="1"/>
</dbReference>
<dbReference type="SUPFAM" id="SSF55486">
    <property type="entry name" value="Metalloproteases ('zincins'), catalytic domain"/>
    <property type="match status" value="1"/>
</dbReference>
<dbReference type="PROSITE" id="PS01306">
    <property type="entry name" value="UPF0054"/>
    <property type="match status" value="1"/>
</dbReference>
<evidence type="ECO:0000255" key="1">
    <source>
        <dbReference type="HAMAP-Rule" id="MF_00009"/>
    </source>
</evidence>
<keyword id="KW-0963">Cytoplasm</keyword>
<keyword id="KW-0255">Endonuclease</keyword>
<keyword id="KW-0378">Hydrolase</keyword>
<keyword id="KW-0479">Metal-binding</keyword>
<keyword id="KW-0540">Nuclease</keyword>
<keyword id="KW-1185">Reference proteome</keyword>
<keyword id="KW-0690">Ribosome biogenesis</keyword>
<keyword id="KW-0698">rRNA processing</keyword>
<keyword id="KW-0862">Zinc</keyword>
<accession>Q98QI3</accession>
<gene>
    <name evidence="1" type="primary">ybeY</name>
    <name type="ordered locus">MYPU_3780</name>
</gene>
<comment type="function">
    <text evidence="1">Single strand-specific metallo-endoribonuclease involved in late-stage 70S ribosome quality control and in maturation of the 3' terminus of the 16S rRNA.</text>
</comment>
<comment type="cofactor">
    <cofactor evidence="1">
        <name>Zn(2+)</name>
        <dbReference type="ChEBI" id="CHEBI:29105"/>
    </cofactor>
    <text evidence="1">Binds 1 zinc ion.</text>
</comment>
<comment type="subcellular location">
    <subcellularLocation>
        <location evidence="1">Cytoplasm</location>
    </subcellularLocation>
</comment>
<comment type="similarity">
    <text evidence="1">Belongs to the endoribonuclease YbeY family.</text>
</comment>
<sequence length="149" mass="17999">MNIINITNKSNFRFMYKKEFLKIMDIIQEKFNFKKRISVDLLITDNKEVRENNLLYRNVDKETDVLSFPFGDPDFFDHLDFIPLGSIIISHEKIVAQALEFNHSKKREFCYLFTHSLLHLLGYDHKEEDEEKIMNQYTKEIVEKLNIYR</sequence>
<proteinExistence type="inferred from homology"/>
<protein>
    <recommendedName>
        <fullName evidence="1">Endoribonuclease YbeY</fullName>
        <ecNumber evidence="1">3.1.-.-</ecNumber>
    </recommendedName>
</protein>
<feature type="chain" id="PRO_0000102493" description="Endoribonuclease YbeY">
    <location>
        <begin position="1"/>
        <end position="149"/>
    </location>
</feature>
<feature type="binding site" evidence="1">
    <location>
        <position position="115"/>
    </location>
    <ligand>
        <name>Zn(2+)</name>
        <dbReference type="ChEBI" id="CHEBI:29105"/>
        <note>catalytic</note>
    </ligand>
</feature>
<feature type="binding site" evidence="1">
    <location>
        <position position="119"/>
    </location>
    <ligand>
        <name>Zn(2+)</name>
        <dbReference type="ChEBI" id="CHEBI:29105"/>
        <note>catalytic</note>
    </ligand>
</feature>
<feature type="binding site" evidence="1">
    <location>
        <position position="125"/>
    </location>
    <ligand>
        <name>Zn(2+)</name>
        <dbReference type="ChEBI" id="CHEBI:29105"/>
        <note>catalytic</note>
    </ligand>
</feature>
<reference key="1">
    <citation type="journal article" date="2001" name="Nucleic Acids Res.">
        <title>The complete genome sequence of the murine respiratory pathogen Mycoplasma pulmonis.</title>
        <authorList>
            <person name="Chambaud I."/>
            <person name="Heilig R."/>
            <person name="Ferris S."/>
            <person name="Barbe V."/>
            <person name="Samson D."/>
            <person name="Galisson F."/>
            <person name="Moszer I."/>
            <person name="Dybvig K."/>
            <person name="Wroblewski H."/>
            <person name="Viari A."/>
            <person name="Rocha E.P.C."/>
            <person name="Blanchard A."/>
        </authorList>
    </citation>
    <scope>NUCLEOTIDE SEQUENCE [LARGE SCALE GENOMIC DNA]</scope>
    <source>
        <strain>UAB CTIP</strain>
    </source>
</reference>